<evidence type="ECO:0000255" key="1">
    <source>
        <dbReference type="HAMAP-Rule" id="MF_01395"/>
    </source>
</evidence>
<evidence type="ECO:0000255" key="2">
    <source>
        <dbReference type="PROSITE-ProRule" id="PRU01136"/>
    </source>
</evidence>
<accession>B2V3S6</accession>
<proteinExistence type="inferred from homology"/>
<feature type="chain" id="PRO_0000358967" description="Acetyl-coenzyme A carboxylase carboxyl transferase subunit beta">
    <location>
        <begin position="1"/>
        <end position="291"/>
    </location>
</feature>
<feature type="domain" description="CoA carboxyltransferase N-terminal" evidence="2">
    <location>
        <begin position="34"/>
        <end position="291"/>
    </location>
</feature>
<feature type="zinc finger region" description="C4-type" evidence="1">
    <location>
        <begin position="38"/>
        <end position="60"/>
    </location>
</feature>
<feature type="binding site" evidence="1">
    <location>
        <position position="38"/>
    </location>
    <ligand>
        <name>Zn(2+)</name>
        <dbReference type="ChEBI" id="CHEBI:29105"/>
    </ligand>
</feature>
<feature type="binding site" evidence="1">
    <location>
        <position position="41"/>
    </location>
    <ligand>
        <name>Zn(2+)</name>
        <dbReference type="ChEBI" id="CHEBI:29105"/>
    </ligand>
</feature>
<feature type="binding site" evidence="1">
    <location>
        <position position="57"/>
    </location>
    <ligand>
        <name>Zn(2+)</name>
        <dbReference type="ChEBI" id="CHEBI:29105"/>
    </ligand>
</feature>
<feature type="binding site" evidence="1">
    <location>
        <position position="60"/>
    </location>
    <ligand>
        <name>Zn(2+)</name>
        <dbReference type="ChEBI" id="CHEBI:29105"/>
    </ligand>
</feature>
<sequence length="291" mass="32913">MLKDLFKKSKYATVNPSAYKSKVVEEKPNIPSGMWTKCSNCNSMIYYEDLENNKYVCTKCNQHFRISPKERIKQIFDKDTFKEMWKSLKTNNPIDFEDYEEKINKSQSNTGSKEAVVTGVGRINDLEVACAIMDSFFMMGSMGTVVGEKITRIVEYATENNLPILIFTASGGARMQEGIFSLMQMAKISAALARHDEKGLLYITILTDPTTGGVTASFAMEGDIILSEPNTLVGFAGRRVIENTINETLPESFQKSEFLLEKGFIDSIVERKNMRAYLYKILILHGVNKYE</sequence>
<comment type="function">
    <text evidence="1">Component of the acetyl coenzyme A carboxylase (ACC) complex. Biotin carboxylase (BC) catalyzes the carboxylation of biotin on its carrier protein (BCCP) and then the CO(2) group is transferred by the transcarboxylase to acetyl-CoA to form malonyl-CoA.</text>
</comment>
<comment type="catalytic activity">
    <reaction evidence="1">
        <text>N(6)-carboxybiotinyl-L-lysyl-[protein] + acetyl-CoA = N(6)-biotinyl-L-lysyl-[protein] + malonyl-CoA</text>
        <dbReference type="Rhea" id="RHEA:54728"/>
        <dbReference type="Rhea" id="RHEA-COMP:10505"/>
        <dbReference type="Rhea" id="RHEA-COMP:10506"/>
        <dbReference type="ChEBI" id="CHEBI:57288"/>
        <dbReference type="ChEBI" id="CHEBI:57384"/>
        <dbReference type="ChEBI" id="CHEBI:83144"/>
        <dbReference type="ChEBI" id="CHEBI:83145"/>
        <dbReference type="EC" id="2.1.3.15"/>
    </reaction>
</comment>
<comment type="cofactor">
    <cofactor evidence="1">
        <name>Zn(2+)</name>
        <dbReference type="ChEBI" id="CHEBI:29105"/>
    </cofactor>
    <text evidence="1">Binds 1 zinc ion per subunit.</text>
</comment>
<comment type="pathway">
    <text evidence="1">Lipid metabolism; malonyl-CoA biosynthesis; malonyl-CoA from acetyl-CoA: step 1/1.</text>
</comment>
<comment type="subunit">
    <text evidence="1">Acetyl-CoA carboxylase is a heterohexamer composed of biotin carboxyl carrier protein (AccB), biotin carboxylase (AccC) and two subunits each of ACCase subunit alpha (AccA) and ACCase subunit beta (AccD).</text>
</comment>
<comment type="subcellular location">
    <subcellularLocation>
        <location evidence="1">Cytoplasm</location>
    </subcellularLocation>
</comment>
<comment type="similarity">
    <text evidence="1">Belongs to the AccD/PCCB family.</text>
</comment>
<name>ACCD_CLOBA</name>
<gene>
    <name evidence="1" type="primary">accD</name>
    <name type="ordered locus">CLH_1089</name>
</gene>
<protein>
    <recommendedName>
        <fullName evidence="1">Acetyl-coenzyme A carboxylase carboxyl transferase subunit beta</fullName>
        <shortName evidence="1">ACCase subunit beta</shortName>
        <shortName evidence="1">Acetyl-CoA carboxylase carboxyltransferase subunit beta</shortName>
        <ecNumber evidence="1">2.1.3.15</ecNumber>
    </recommendedName>
</protein>
<keyword id="KW-0067">ATP-binding</keyword>
<keyword id="KW-0963">Cytoplasm</keyword>
<keyword id="KW-0275">Fatty acid biosynthesis</keyword>
<keyword id="KW-0276">Fatty acid metabolism</keyword>
<keyword id="KW-0444">Lipid biosynthesis</keyword>
<keyword id="KW-0443">Lipid metabolism</keyword>
<keyword id="KW-0479">Metal-binding</keyword>
<keyword id="KW-0547">Nucleotide-binding</keyword>
<keyword id="KW-0808">Transferase</keyword>
<keyword id="KW-0862">Zinc</keyword>
<keyword id="KW-0863">Zinc-finger</keyword>
<dbReference type="EC" id="2.1.3.15" evidence="1"/>
<dbReference type="EMBL" id="CP001078">
    <property type="protein sequence ID" value="ACD52359.1"/>
    <property type="molecule type" value="Genomic_DNA"/>
</dbReference>
<dbReference type="RefSeq" id="WP_003373986.1">
    <property type="nucleotide sequence ID" value="NC_010723.1"/>
</dbReference>
<dbReference type="SMR" id="B2V3S6"/>
<dbReference type="KEGG" id="cbt:CLH_1089"/>
<dbReference type="HOGENOM" id="CLU_015486_1_1_9"/>
<dbReference type="UniPathway" id="UPA00655">
    <property type="reaction ID" value="UER00711"/>
</dbReference>
<dbReference type="GO" id="GO:0009317">
    <property type="term" value="C:acetyl-CoA carboxylase complex"/>
    <property type="evidence" value="ECO:0007669"/>
    <property type="project" value="InterPro"/>
</dbReference>
<dbReference type="GO" id="GO:0003989">
    <property type="term" value="F:acetyl-CoA carboxylase activity"/>
    <property type="evidence" value="ECO:0007669"/>
    <property type="project" value="InterPro"/>
</dbReference>
<dbReference type="GO" id="GO:0005524">
    <property type="term" value="F:ATP binding"/>
    <property type="evidence" value="ECO:0007669"/>
    <property type="project" value="UniProtKB-KW"/>
</dbReference>
<dbReference type="GO" id="GO:0016743">
    <property type="term" value="F:carboxyl- or carbamoyltransferase activity"/>
    <property type="evidence" value="ECO:0007669"/>
    <property type="project" value="UniProtKB-UniRule"/>
</dbReference>
<dbReference type="GO" id="GO:0008270">
    <property type="term" value="F:zinc ion binding"/>
    <property type="evidence" value="ECO:0007669"/>
    <property type="project" value="UniProtKB-UniRule"/>
</dbReference>
<dbReference type="GO" id="GO:0006633">
    <property type="term" value="P:fatty acid biosynthetic process"/>
    <property type="evidence" value="ECO:0007669"/>
    <property type="project" value="UniProtKB-KW"/>
</dbReference>
<dbReference type="GO" id="GO:2001295">
    <property type="term" value="P:malonyl-CoA biosynthetic process"/>
    <property type="evidence" value="ECO:0007669"/>
    <property type="project" value="UniProtKB-UniRule"/>
</dbReference>
<dbReference type="Gene3D" id="3.90.226.10">
    <property type="entry name" value="2-enoyl-CoA Hydratase, Chain A, domain 1"/>
    <property type="match status" value="1"/>
</dbReference>
<dbReference type="HAMAP" id="MF_01395">
    <property type="entry name" value="AcetylCoA_CT_beta"/>
    <property type="match status" value="1"/>
</dbReference>
<dbReference type="InterPro" id="IPR034733">
    <property type="entry name" value="AcCoA_carboxyl_beta"/>
</dbReference>
<dbReference type="InterPro" id="IPR000438">
    <property type="entry name" value="Acetyl_CoA_COase_Trfase_b_su"/>
</dbReference>
<dbReference type="InterPro" id="IPR029045">
    <property type="entry name" value="ClpP/crotonase-like_dom_sf"/>
</dbReference>
<dbReference type="InterPro" id="IPR011762">
    <property type="entry name" value="COA_CT_N"/>
</dbReference>
<dbReference type="InterPro" id="IPR041010">
    <property type="entry name" value="Znf-ACC"/>
</dbReference>
<dbReference type="NCBIfam" id="TIGR00515">
    <property type="entry name" value="accD"/>
    <property type="match status" value="1"/>
</dbReference>
<dbReference type="PANTHER" id="PTHR42995">
    <property type="entry name" value="ACETYL-COENZYME A CARBOXYLASE CARBOXYL TRANSFERASE SUBUNIT BETA, CHLOROPLASTIC"/>
    <property type="match status" value="1"/>
</dbReference>
<dbReference type="PANTHER" id="PTHR42995:SF5">
    <property type="entry name" value="ACETYL-COENZYME A CARBOXYLASE CARBOXYL TRANSFERASE SUBUNIT BETA, CHLOROPLASTIC"/>
    <property type="match status" value="1"/>
</dbReference>
<dbReference type="Pfam" id="PF01039">
    <property type="entry name" value="Carboxyl_trans"/>
    <property type="match status" value="1"/>
</dbReference>
<dbReference type="Pfam" id="PF17848">
    <property type="entry name" value="Zn_ribbon_ACC"/>
    <property type="match status" value="1"/>
</dbReference>
<dbReference type="PRINTS" id="PR01070">
    <property type="entry name" value="ACCCTRFRASEB"/>
</dbReference>
<dbReference type="SUPFAM" id="SSF52096">
    <property type="entry name" value="ClpP/crotonase"/>
    <property type="match status" value="1"/>
</dbReference>
<dbReference type="PROSITE" id="PS50980">
    <property type="entry name" value="COA_CT_NTER"/>
    <property type="match status" value="1"/>
</dbReference>
<reference key="1">
    <citation type="submission" date="2008-05" db="EMBL/GenBank/DDBJ databases">
        <title>Complete genome sequence of Clostridium botulinum E3 str. Alaska E43.</title>
        <authorList>
            <person name="Brinkac L.M."/>
            <person name="Brown J.L."/>
            <person name="Bruce D."/>
            <person name="Detter C."/>
            <person name="Munk C."/>
            <person name="Smith L.A."/>
            <person name="Smith T.J."/>
            <person name="Sutton G."/>
            <person name="Brettin T.S."/>
        </authorList>
    </citation>
    <scope>NUCLEOTIDE SEQUENCE [LARGE SCALE GENOMIC DNA]</scope>
    <source>
        <strain>Alaska E43 / Type E3</strain>
    </source>
</reference>
<organism>
    <name type="scientific">Clostridium botulinum (strain Alaska E43 / Type E3)</name>
    <dbReference type="NCBI Taxonomy" id="508767"/>
    <lineage>
        <taxon>Bacteria</taxon>
        <taxon>Bacillati</taxon>
        <taxon>Bacillota</taxon>
        <taxon>Clostridia</taxon>
        <taxon>Eubacteriales</taxon>
        <taxon>Clostridiaceae</taxon>
        <taxon>Clostridium</taxon>
    </lineage>
</organism>